<proteinExistence type="inferred from homology"/>
<comment type="function">
    <text evidence="1">One of at least two accessory proteins for anaerobic nitric oxide (NO) reductase. Reduces the rubredoxin moiety of NO reductase.</text>
</comment>
<comment type="catalytic activity">
    <reaction evidence="1">
        <text>2 reduced [nitric oxide reductase rubredoxin domain] + NAD(+) + H(+) = 2 oxidized [nitric oxide reductase rubredoxin domain] + NADH</text>
        <dbReference type="Rhea" id="RHEA:42960"/>
        <dbReference type="Rhea" id="RHEA-COMP:10304"/>
        <dbReference type="Rhea" id="RHEA-COMP:10305"/>
        <dbReference type="ChEBI" id="CHEBI:15378"/>
        <dbReference type="ChEBI" id="CHEBI:29033"/>
        <dbReference type="ChEBI" id="CHEBI:29034"/>
        <dbReference type="ChEBI" id="CHEBI:57540"/>
        <dbReference type="ChEBI" id="CHEBI:57945"/>
    </reaction>
</comment>
<comment type="cofactor">
    <cofactor evidence="1">
        <name>FAD</name>
        <dbReference type="ChEBI" id="CHEBI:57692"/>
    </cofactor>
</comment>
<comment type="pathway">
    <text evidence="1">Nitrogen metabolism; nitric oxide reduction.</text>
</comment>
<comment type="subcellular location">
    <subcellularLocation>
        <location evidence="1">Cytoplasm</location>
    </subcellularLocation>
</comment>
<comment type="similarity">
    <text evidence="1">Belongs to the FAD-dependent oxidoreductase family.</text>
</comment>
<gene>
    <name evidence="1" type="primary">norW</name>
    <name evidence="1" type="synonym">flrR</name>
    <name type="ordered locus">ECP_2671</name>
</gene>
<evidence type="ECO:0000255" key="1">
    <source>
        <dbReference type="HAMAP-Rule" id="MF_01313"/>
    </source>
</evidence>
<accession>Q0TEG9</accession>
<keyword id="KW-0963">Cytoplasm</keyword>
<keyword id="KW-0274">FAD</keyword>
<keyword id="KW-0285">Flavoprotein</keyword>
<keyword id="KW-0520">NAD</keyword>
<keyword id="KW-0560">Oxidoreductase</keyword>
<feature type="chain" id="PRO_0000305608" description="Nitric oxide reductase FlRd-NAD(+) reductase">
    <location>
        <begin position="1"/>
        <end position="377"/>
    </location>
</feature>
<dbReference type="EC" id="1.18.1.-" evidence="1"/>
<dbReference type="EMBL" id="CP000247">
    <property type="protein sequence ID" value="ABG70660.1"/>
    <property type="molecule type" value="Genomic_DNA"/>
</dbReference>
<dbReference type="RefSeq" id="WP_000064709.1">
    <property type="nucleotide sequence ID" value="NC_008253.1"/>
</dbReference>
<dbReference type="SMR" id="Q0TEG9"/>
<dbReference type="KEGG" id="ecp:ECP_2671"/>
<dbReference type="HOGENOM" id="CLU_003291_4_4_6"/>
<dbReference type="UniPathway" id="UPA00638"/>
<dbReference type="Proteomes" id="UP000009182">
    <property type="component" value="Chromosome"/>
</dbReference>
<dbReference type="GO" id="GO:0005737">
    <property type="term" value="C:cytoplasm"/>
    <property type="evidence" value="ECO:0007669"/>
    <property type="project" value="UniProtKB-SubCell"/>
</dbReference>
<dbReference type="GO" id="GO:0016731">
    <property type="term" value="F:oxidoreductase activity, acting on iron-sulfur proteins as donors, NAD or NADP as acceptor"/>
    <property type="evidence" value="ECO:0007669"/>
    <property type="project" value="UniProtKB-UniRule"/>
</dbReference>
<dbReference type="FunFam" id="3.50.50.60:FF:000075">
    <property type="entry name" value="Nitric oxide reductase FlRd-NAD(+) reductase"/>
    <property type="match status" value="1"/>
</dbReference>
<dbReference type="Gene3D" id="3.30.390.120">
    <property type="match status" value="1"/>
</dbReference>
<dbReference type="Gene3D" id="3.50.50.60">
    <property type="entry name" value="FAD/NAD(P)-binding domain"/>
    <property type="match status" value="2"/>
</dbReference>
<dbReference type="HAMAP" id="MF_01313">
    <property type="entry name" value="NorW"/>
    <property type="match status" value="1"/>
</dbReference>
<dbReference type="InterPro" id="IPR050260">
    <property type="entry name" value="FAD-bd_OxRdtase"/>
</dbReference>
<dbReference type="InterPro" id="IPR036188">
    <property type="entry name" value="FAD/NAD-bd_sf"/>
</dbReference>
<dbReference type="InterPro" id="IPR023753">
    <property type="entry name" value="FAD/NAD-binding_dom"/>
</dbReference>
<dbReference type="InterPro" id="IPR023961">
    <property type="entry name" value="NO_rdtase_NorW"/>
</dbReference>
<dbReference type="InterPro" id="IPR041364">
    <property type="entry name" value="Rbx-bd"/>
</dbReference>
<dbReference type="NCBIfam" id="NF003437">
    <property type="entry name" value="PRK04965.1"/>
    <property type="match status" value="1"/>
</dbReference>
<dbReference type="PANTHER" id="PTHR43429:SF3">
    <property type="entry name" value="NITRITE REDUCTASE [NAD(P)H]"/>
    <property type="match status" value="1"/>
</dbReference>
<dbReference type="PANTHER" id="PTHR43429">
    <property type="entry name" value="PYRIDINE NUCLEOTIDE-DISULFIDE OXIDOREDUCTASE DOMAIN-CONTAINING"/>
    <property type="match status" value="1"/>
</dbReference>
<dbReference type="Pfam" id="PF07992">
    <property type="entry name" value="Pyr_redox_2"/>
    <property type="match status" value="1"/>
</dbReference>
<dbReference type="Pfam" id="PF18113">
    <property type="entry name" value="Rbx_binding"/>
    <property type="match status" value="1"/>
</dbReference>
<dbReference type="PRINTS" id="PR00368">
    <property type="entry name" value="FADPNR"/>
</dbReference>
<dbReference type="PRINTS" id="PR00411">
    <property type="entry name" value="PNDRDTASEI"/>
</dbReference>
<dbReference type="SUPFAM" id="SSF51905">
    <property type="entry name" value="FAD/NAD(P)-binding domain"/>
    <property type="match status" value="1"/>
</dbReference>
<protein>
    <recommendedName>
        <fullName evidence="1">Nitric oxide reductase FlRd-NAD(+) reductase</fullName>
        <ecNumber evidence="1">1.18.1.-</ecNumber>
    </recommendedName>
    <alternativeName>
        <fullName evidence="1">Flavorubredoxin reductase</fullName>
        <shortName evidence="1">FlRd-reductase</shortName>
        <shortName evidence="1">FlavoRb reductase</shortName>
    </alternativeName>
</protein>
<reference key="1">
    <citation type="journal article" date="2006" name="Mol. Microbiol.">
        <title>Role of pathogenicity island-associated integrases in the genome plasticity of uropathogenic Escherichia coli strain 536.</title>
        <authorList>
            <person name="Hochhut B."/>
            <person name="Wilde C."/>
            <person name="Balling G."/>
            <person name="Middendorf B."/>
            <person name="Dobrindt U."/>
            <person name="Brzuszkiewicz E."/>
            <person name="Gottschalk G."/>
            <person name="Carniel E."/>
            <person name="Hacker J."/>
        </authorList>
    </citation>
    <scope>NUCLEOTIDE SEQUENCE [LARGE SCALE GENOMIC DNA]</scope>
    <source>
        <strain>536 / UPEC</strain>
    </source>
</reference>
<name>NORW_ECOL5</name>
<organism>
    <name type="scientific">Escherichia coli O6:K15:H31 (strain 536 / UPEC)</name>
    <dbReference type="NCBI Taxonomy" id="362663"/>
    <lineage>
        <taxon>Bacteria</taxon>
        <taxon>Pseudomonadati</taxon>
        <taxon>Pseudomonadota</taxon>
        <taxon>Gammaproteobacteria</taxon>
        <taxon>Enterobacterales</taxon>
        <taxon>Enterobacteriaceae</taxon>
        <taxon>Escherichia</taxon>
    </lineage>
</organism>
<sequence>MSNGIVIIGSGFAARQLVKNIRKQDASIPLTLIAADSMDEYNKPDLSHVISQGQRADDLTRQTAGEFAEQFNLRLFPHTWVTDIDAEAHVVKSQNNQWQYDKLVLATGASAFVPPVPGRELILTLNSQQEYRACETQLRDARRVLIVGGGLIGSELAMDFCRAGKAVTLIDNAASILASLMPPEVSSRLQHRLTEMGVHLLLKSQLQGLEKTDSGILATLDRQRCIEVDAVIAATGLRPETALARRAGLTINRGVCVDSYLQTSNADIYALGDCAEINGQVLPFLQPIQLSAMVLAKNLLGNNTPLKLPAMLVKIKTPELPLHLAGETQRQDLRWHIYTERQGMVARGVDDADQLRAFVVSEDRMKEAFGLLKTLSM</sequence>